<accession>P36772</accession>
<evidence type="ECO:0000255" key="1">
    <source>
        <dbReference type="HAMAP-Rule" id="MF_01973"/>
    </source>
</evidence>
<evidence type="ECO:0000255" key="2">
    <source>
        <dbReference type="PROSITE-ProRule" id="PRU01122"/>
    </source>
</evidence>
<evidence type="ECO:0000255" key="3">
    <source>
        <dbReference type="PROSITE-ProRule" id="PRU01123"/>
    </source>
</evidence>
<name>LON_BRECH</name>
<dbReference type="EC" id="3.4.21.53" evidence="1"/>
<dbReference type="EMBL" id="D00863">
    <property type="protein sequence ID" value="BAA00737.1"/>
    <property type="molecule type" value="Genomic_DNA"/>
</dbReference>
<dbReference type="RefSeq" id="WP_203356361.1">
    <property type="nucleotide sequence ID" value="NZ_CP069127.1"/>
</dbReference>
<dbReference type="SMR" id="P36772"/>
<dbReference type="STRING" id="54911.AN963_02960"/>
<dbReference type="MEROPS" id="S16.001"/>
<dbReference type="GO" id="GO:0005737">
    <property type="term" value="C:cytoplasm"/>
    <property type="evidence" value="ECO:0007669"/>
    <property type="project" value="UniProtKB-SubCell"/>
</dbReference>
<dbReference type="GO" id="GO:0005524">
    <property type="term" value="F:ATP binding"/>
    <property type="evidence" value="ECO:0007669"/>
    <property type="project" value="UniProtKB-UniRule"/>
</dbReference>
<dbReference type="GO" id="GO:0016887">
    <property type="term" value="F:ATP hydrolysis activity"/>
    <property type="evidence" value="ECO:0007669"/>
    <property type="project" value="UniProtKB-UniRule"/>
</dbReference>
<dbReference type="GO" id="GO:0004176">
    <property type="term" value="F:ATP-dependent peptidase activity"/>
    <property type="evidence" value="ECO:0007669"/>
    <property type="project" value="UniProtKB-UniRule"/>
</dbReference>
<dbReference type="GO" id="GO:0043565">
    <property type="term" value="F:sequence-specific DNA binding"/>
    <property type="evidence" value="ECO:0007669"/>
    <property type="project" value="UniProtKB-UniRule"/>
</dbReference>
<dbReference type="GO" id="GO:0004252">
    <property type="term" value="F:serine-type endopeptidase activity"/>
    <property type="evidence" value="ECO:0007669"/>
    <property type="project" value="UniProtKB-UniRule"/>
</dbReference>
<dbReference type="GO" id="GO:0034605">
    <property type="term" value="P:cellular response to heat"/>
    <property type="evidence" value="ECO:0007669"/>
    <property type="project" value="UniProtKB-UniRule"/>
</dbReference>
<dbReference type="GO" id="GO:0006515">
    <property type="term" value="P:protein quality control for misfolded or incompletely synthesized proteins"/>
    <property type="evidence" value="ECO:0007669"/>
    <property type="project" value="UniProtKB-UniRule"/>
</dbReference>
<dbReference type="CDD" id="cd19500">
    <property type="entry name" value="RecA-like_Lon"/>
    <property type="match status" value="1"/>
</dbReference>
<dbReference type="FunFam" id="1.20.58.1480:FF:000001">
    <property type="entry name" value="Lon protease"/>
    <property type="match status" value="1"/>
</dbReference>
<dbReference type="FunFam" id="3.30.230.10:FF:000010">
    <property type="entry name" value="Lon protease"/>
    <property type="match status" value="1"/>
</dbReference>
<dbReference type="FunFam" id="3.40.50.300:FF:000382">
    <property type="entry name" value="Lon protease homolog 2, peroxisomal"/>
    <property type="match status" value="1"/>
</dbReference>
<dbReference type="Gene3D" id="1.10.8.60">
    <property type="match status" value="1"/>
</dbReference>
<dbReference type="Gene3D" id="1.20.5.5270">
    <property type="match status" value="1"/>
</dbReference>
<dbReference type="Gene3D" id="1.20.58.1480">
    <property type="match status" value="1"/>
</dbReference>
<dbReference type="Gene3D" id="3.30.230.10">
    <property type="match status" value="1"/>
</dbReference>
<dbReference type="Gene3D" id="2.30.130.40">
    <property type="entry name" value="LON domain-like"/>
    <property type="match status" value="1"/>
</dbReference>
<dbReference type="Gene3D" id="3.40.50.300">
    <property type="entry name" value="P-loop containing nucleotide triphosphate hydrolases"/>
    <property type="match status" value="1"/>
</dbReference>
<dbReference type="HAMAP" id="MF_01973">
    <property type="entry name" value="lon_bact"/>
    <property type="match status" value="1"/>
</dbReference>
<dbReference type="InterPro" id="IPR003593">
    <property type="entry name" value="AAA+_ATPase"/>
</dbReference>
<dbReference type="InterPro" id="IPR003959">
    <property type="entry name" value="ATPase_AAA_core"/>
</dbReference>
<dbReference type="InterPro" id="IPR027543">
    <property type="entry name" value="Lon_bac"/>
</dbReference>
<dbReference type="InterPro" id="IPR004815">
    <property type="entry name" value="Lon_bac/euk-typ"/>
</dbReference>
<dbReference type="InterPro" id="IPR054594">
    <property type="entry name" value="Lon_lid"/>
</dbReference>
<dbReference type="InterPro" id="IPR008269">
    <property type="entry name" value="Lon_proteolytic"/>
</dbReference>
<dbReference type="InterPro" id="IPR027065">
    <property type="entry name" value="Lon_Prtase"/>
</dbReference>
<dbReference type="InterPro" id="IPR003111">
    <property type="entry name" value="Lon_prtase_N"/>
</dbReference>
<dbReference type="InterPro" id="IPR046336">
    <property type="entry name" value="Lon_prtase_N_sf"/>
</dbReference>
<dbReference type="InterPro" id="IPR027417">
    <property type="entry name" value="P-loop_NTPase"/>
</dbReference>
<dbReference type="InterPro" id="IPR008268">
    <property type="entry name" value="Peptidase_S16_AS"/>
</dbReference>
<dbReference type="InterPro" id="IPR015947">
    <property type="entry name" value="PUA-like_sf"/>
</dbReference>
<dbReference type="InterPro" id="IPR020568">
    <property type="entry name" value="Ribosomal_Su5_D2-typ_SF"/>
</dbReference>
<dbReference type="InterPro" id="IPR014721">
    <property type="entry name" value="Ribsml_uS5_D2-typ_fold_subgr"/>
</dbReference>
<dbReference type="NCBIfam" id="TIGR00763">
    <property type="entry name" value="lon"/>
    <property type="match status" value="1"/>
</dbReference>
<dbReference type="NCBIfam" id="NF008053">
    <property type="entry name" value="PRK10787.1"/>
    <property type="match status" value="1"/>
</dbReference>
<dbReference type="PANTHER" id="PTHR10046">
    <property type="entry name" value="ATP DEPENDENT LON PROTEASE FAMILY MEMBER"/>
    <property type="match status" value="1"/>
</dbReference>
<dbReference type="Pfam" id="PF00004">
    <property type="entry name" value="AAA"/>
    <property type="match status" value="1"/>
</dbReference>
<dbReference type="Pfam" id="PF05362">
    <property type="entry name" value="Lon_C"/>
    <property type="match status" value="1"/>
</dbReference>
<dbReference type="Pfam" id="PF22667">
    <property type="entry name" value="Lon_lid"/>
    <property type="match status" value="1"/>
</dbReference>
<dbReference type="Pfam" id="PF02190">
    <property type="entry name" value="LON_substr_bdg"/>
    <property type="match status" value="1"/>
</dbReference>
<dbReference type="PIRSF" id="PIRSF001174">
    <property type="entry name" value="Lon_proteas"/>
    <property type="match status" value="1"/>
</dbReference>
<dbReference type="PRINTS" id="PR00830">
    <property type="entry name" value="ENDOLAPTASE"/>
</dbReference>
<dbReference type="SMART" id="SM00382">
    <property type="entry name" value="AAA"/>
    <property type="match status" value="1"/>
</dbReference>
<dbReference type="SMART" id="SM00464">
    <property type="entry name" value="LON"/>
    <property type="match status" value="1"/>
</dbReference>
<dbReference type="SUPFAM" id="SSF52540">
    <property type="entry name" value="P-loop containing nucleoside triphosphate hydrolases"/>
    <property type="match status" value="1"/>
</dbReference>
<dbReference type="SUPFAM" id="SSF88697">
    <property type="entry name" value="PUA domain-like"/>
    <property type="match status" value="1"/>
</dbReference>
<dbReference type="SUPFAM" id="SSF54211">
    <property type="entry name" value="Ribosomal protein S5 domain 2-like"/>
    <property type="match status" value="1"/>
</dbReference>
<dbReference type="PROSITE" id="PS51787">
    <property type="entry name" value="LON_N"/>
    <property type="match status" value="1"/>
</dbReference>
<dbReference type="PROSITE" id="PS51786">
    <property type="entry name" value="LON_PROTEOLYTIC"/>
    <property type="match status" value="1"/>
</dbReference>
<dbReference type="PROSITE" id="PS01046">
    <property type="entry name" value="LON_SER"/>
    <property type="match status" value="1"/>
</dbReference>
<comment type="function">
    <text evidence="1">ATP-dependent serine protease that mediates the selective degradation of mutant and abnormal proteins as well as certain short-lived regulatory proteins. Required for cellular homeostasis and for survival from DNA damage and developmental changes induced by stress. Degrades polypeptides processively to yield small peptide fragments that are 5 to 10 amino acids long. Binds to DNA in a double-stranded, site-specific manner.</text>
</comment>
<comment type="catalytic activity">
    <reaction evidence="1">
        <text>Hydrolysis of proteins in presence of ATP.</text>
        <dbReference type="EC" id="3.4.21.53"/>
    </reaction>
</comment>
<comment type="subunit">
    <text evidence="1">Homohexamer. Organized in a ring with a central cavity.</text>
</comment>
<comment type="subcellular location">
    <subcellularLocation>
        <location>Cytoplasm</location>
    </subcellularLocation>
</comment>
<comment type="induction">
    <text evidence="1">By heat shock.</text>
</comment>
<comment type="similarity">
    <text evidence="1">Belongs to the peptidase S16 family.</text>
</comment>
<organism>
    <name type="scientific">Brevibacillus choshinensis</name>
    <dbReference type="NCBI Taxonomy" id="54911"/>
    <lineage>
        <taxon>Bacteria</taxon>
        <taxon>Bacillati</taxon>
        <taxon>Bacillota</taxon>
        <taxon>Bacilli</taxon>
        <taxon>Bacillales</taxon>
        <taxon>Paenibacillaceae</taxon>
        <taxon>Brevibacillus</taxon>
    </lineage>
</organism>
<feature type="chain" id="PRO_0000076120" description="Lon protease">
    <location>
        <begin position="1"/>
        <end position="779"/>
    </location>
</feature>
<feature type="domain" description="Lon N-terminal" evidence="3">
    <location>
        <begin position="10"/>
        <end position="203"/>
    </location>
</feature>
<feature type="domain" description="Lon proteolytic" evidence="2">
    <location>
        <begin position="591"/>
        <end position="772"/>
    </location>
</feature>
<feature type="active site" evidence="1">
    <location>
        <position position="678"/>
    </location>
</feature>
<feature type="active site" evidence="1">
    <location>
        <position position="721"/>
    </location>
</feature>
<feature type="binding site" evidence="1">
    <location>
        <begin position="355"/>
        <end position="362"/>
    </location>
    <ligand>
        <name>ATP</name>
        <dbReference type="ChEBI" id="CHEBI:30616"/>
    </ligand>
</feature>
<gene>
    <name evidence="1" type="primary">lon</name>
</gene>
<sequence>MGERSGKRELPLLPLRGLLVYPTMVLHLDVGREKSIRALEQAMVDDNKILLATQEEVHIEEPDAEQIYSIGTVARVKQMLKLPNGTIRVLVEGLQRAKIEEYLQKEDYFVVSITYLKEEKAEENEVEALMRSLLTHFEQYIKLSKKVSPETLTSVQDIEEPGRLADVIASHLPLKMKDKQEILETVNIQERLEILLTILNNEREVLELERKIGNRVKKQMERTQKEYYLREQMKAIQKELGDKDGRQGEVDELRAQLEKSDAPERIKAKIEKELERLEKMPSTSAEGSVIRTYIDTLFALPWTKTTEDNLDIKHAEEVLDEDHYGLEKPKERVLEYLAVQKLVNSMRGPILCLVGPPGVGKTSLARSVARALGREFVRISLGGVRDEAEIRGHRRTYVGALPGRIIQGMKQAGTINPVFLLDEIDKLASDFRGDPASALLEVLDPNQNDKFSDHYIEETYDLTNVMFITTANSLDTIPRPLLDRMEVISISGYTELEKLNILRGYLLPKQMEDHGLGKDKLQMNEDAMLKLVRLYTREAGVRNLNREAANVCRKAAKIIVGGEKKRVVVTAKTLEALLGKPRYRYGLAEKKDQVGSVTGLAWTQAGGDTLNVEVSILAGKGKLTLTGQLGDVMKESAQAAFSYIRSRASEWGIDPEFHEKNDIHIHVPEGAIPKDGPSAGITMATALVSALTGIPVKKEVGMTGEITLRGRVLPIGGLKEKCMSAHRAGLTTIILPKDNEKDIEDIPESVREALTFYPVEHLDEVLRHALTKQPVGDKK</sequence>
<keyword id="KW-0067">ATP-binding</keyword>
<keyword id="KW-0963">Cytoplasm</keyword>
<keyword id="KW-0378">Hydrolase</keyword>
<keyword id="KW-0547">Nucleotide-binding</keyword>
<keyword id="KW-0645">Protease</keyword>
<keyword id="KW-0720">Serine protease</keyword>
<keyword id="KW-0346">Stress response</keyword>
<proteinExistence type="inferred from homology"/>
<reference key="1">
    <citation type="journal article" date="1992" name="J. Bacteriol.">
        <title>Cloning, characterization, and inactivation of the Bacillus brevis lon gene.</title>
        <authorList>
            <person name="Ito K."/>
            <person name="Udaka S."/>
            <person name="Yamagata H."/>
        </authorList>
    </citation>
    <scope>NUCLEOTIDE SEQUENCE [GENOMIC DNA]</scope>
    <source>
        <strain>HPD31</strain>
    </source>
</reference>
<protein>
    <recommendedName>
        <fullName evidence="1">Lon protease</fullName>
        <ecNumber evidence="1">3.4.21.53</ecNumber>
    </recommendedName>
    <alternativeName>
        <fullName evidence="1">ATP-dependent protease La</fullName>
    </alternativeName>
</protein>